<evidence type="ECO:0000255" key="1">
    <source>
        <dbReference type="HAMAP-Rule" id="MF_00380"/>
    </source>
</evidence>
<name>IHFA_ACTPJ</name>
<reference key="1">
    <citation type="journal article" date="2008" name="PLoS ONE">
        <title>Genome biology of Actinobacillus pleuropneumoniae JL03, an isolate of serotype 3 prevalent in China.</title>
        <authorList>
            <person name="Xu Z."/>
            <person name="Zhou Y."/>
            <person name="Li L."/>
            <person name="Zhou R."/>
            <person name="Xiao S."/>
            <person name="Wan Y."/>
            <person name="Zhang S."/>
            <person name="Wang K."/>
            <person name="Li W."/>
            <person name="Li L."/>
            <person name="Jin H."/>
            <person name="Kang M."/>
            <person name="Dalai B."/>
            <person name="Li T."/>
            <person name="Liu L."/>
            <person name="Cheng Y."/>
            <person name="Zhang L."/>
            <person name="Xu T."/>
            <person name="Zheng H."/>
            <person name="Pu S."/>
            <person name="Wang B."/>
            <person name="Gu W."/>
            <person name="Zhang X.L."/>
            <person name="Zhu G.-F."/>
            <person name="Wang S."/>
            <person name="Zhao G.-P."/>
            <person name="Chen H."/>
        </authorList>
    </citation>
    <scope>NUCLEOTIDE SEQUENCE [LARGE SCALE GENOMIC DNA]</scope>
    <source>
        <strain>JL03</strain>
    </source>
</reference>
<comment type="function">
    <text evidence="1">This protein is one of the two subunits of integration host factor, a specific DNA-binding protein that functions in genetic recombination as well as in transcriptional and translational control.</text>
</comment>
<comment type="subunit">
    <text evidence="1">Heterodimer of an alpha and a beta chain.</text>
</comment>
<comment type="similarity">
    <text evidence="1">Belongs to the bacterial histone-like protein family.</text>
</comment>
<sequence>MALTKIELAESLVEKCGFDKRIAKLFVEQFFEEIRSSLEKGEEVKLSGFGNFSLREKNARPGRNPKTGETVAVTARRVVVFKPGQKLRDRVENVKVKA</sequence>
<gene>
    <name evidence="1" type="primary">ihfA</name>
    <name evidence="1" type="synonym">himA</name>
    <name type="ordered locus">APJL_0604</name>
</gene>
<proteinExistence type="inferred from homology"/>
<accession>B0BNN9</accession>
<protein>
    <recommendedName>
        <fullName evidence="1">Integration host factor subunit alpha</fullName>
        <shortName evidence="1">IHF-alpha</shortName>
    </recommendedName>
</protein>
<keyword id="KW-0233">DNA recombination</keyword>
<keyword id="KW-0238">DNA-binding</keyword>
<keyword id="KW-0804">Transcription</keyword>
<keyword id="KW-0805">Transcription regulation</keyword>
<keyword id="KW-0810">Translation regulation</keyword>
<dbReference type="EMBL" id="CP000687">
    <property type="protein sequence ID" value="ABY69174.1"/>
    <property type="molecule type" value="Genomic_DNA"/>
</dbReference>
<dbReference type="RefSeq" id="WP_005596864.1">
    <property type="nucleotide sequence ID" value="NC_010278.1"/>
</dbReference>
<dbReference type="SMR" id="B0BNN9"/>
<dbReference type="KEGG" id="apj:APJL_0604"/>
<dbReference type="HOGENOM" id="CLU_105066_1_3_6"/>
<dbReference type="Proteomes" id="UP000008547">
    <property type="component" value="Chromosome"/>
</dbReference>
<dbReference type="GO" id="GO:0005829">
    <property type="term" value="C:cytosol"/>
    <property type="evidence" value="ECO:0007669"/>
    <property type="project" value="TreeGrafter"/>
</dbReference>
<dbReference type="GO" id="GO:0003677">
    <property type="term" value="F:DNA binding"/>
    <property type="evidence" value="ECO:0007669"/>
    <property type="project" value="UniProtKB-UniRule"/>
</dbReference>
<dbReference type="GO" id="GO:0030527">
    <property type="term" value="F:structural constituent of chromatin"/>
    <property type="evidence" value="ECO:0007669"/>
    <property type="project" value="InterPro"/>
</dbReference>
<dbReference type="GO" id="GO:0006310">
    <property type="term" value="P:DNA recombination"/>
    <property type="evidence" value="ECO:0007669"/>
    <property type="project" value="UniProtKB-UniRule"/>
</dbReference>
<dbReference type="GO" id="GO:0009893">
    <property type="term" value="P:positive regulation of metabolic process"/>
    <property type="evidence" value="ECO:0007669"/>
    <property type="project" value="UniProtKB-ARBA"/>
</dbReference>
<dbReference type="GO" id="GO:0006355">
    <property type="term" value="P:regulation of DNA-templated transcription"/>
    <property type="evidence" value="ECO:0007669"/>
    <property type="project" value="UniProtKB-UniRule"/>
</dbReference>
<dbReference type="GO" id="GO:0006417">
    <property type="term" value="P:regulation of translation"/>
    <property type="evidence" value="ECO:0007669"/>
    <property type="project" value="UniProtKB-UniRule"/>
</dbReference>
<dbReference type="CDD" id="cd13835">
    <property type="entry name" value="IHF_A"/>
    <property type="match status" value="1"/>
</dbReference>
<dbReference type="Gene3D" id="4.10.520.10">
    <property type="entry name" value="IHF-like DNA-binding proteins"/>
    <property type="match status" value="1"/>
</dbReference>
<dbReference type="HAMAP" id="MF_00380">
    <property type="entry name" value="IHF_alpha"/>
    <property type="match status" value="1"/>
</dbReference>
<dbReference type="InterPro" id="IPR000119">
    <property type="entry name" value="Hist_DNA-bd"/>
</dbReference>
<dbReference type="InterPro" id="IPR020816">
    <property type="entry name" value="Histone-like_DNA-bd_CS"/>
</dbReference>
<dbReference type="InterPro" id="IPR010992">
    <property type="entry name" value="IHF-like_DNA-bd_dom_sf"/>
</dbReference>
<dbReference type="InterPro" id="IPR005684">
    <property type="entry name" value="IHF_alpha"/>
</dbReference>
<dbReference type="NCBIfam" id="TIGR00987">
    <property type="entry name" value="himA"/>
    <property type="match status" value="1"/>
</dbReference>
<dbReference type="NCBIfam" id="NF001401">
    <property type="entry name" value="PRK00285.1"/>
    <property type="match status" value="1"/>
</dbReference>
<dbReference type="PANTHER" id="PTHR33175">
    <property type="entry name" value="DNA-BINDING PROTEIN HU"/>
    <property type="match status" value="1"/>
</dbReference>
<dbReference type="PANTHER" id="PTHR33175:SF2">
    <property type="entry name" value="INTEGRATION HOST FACTOR SUBUNIT ALPHA"/>
    <property type="match status" value="1"/>
</dbReference>
<dbReference type="Pfam" id="PF00216">
    <property type="entry name" value="Bac_DNA_binding"/>
    <property type="match status" value="1"/>
</dbReference>
<dbReference type="PRINTS" id="PR01727">
    <property type="entry name" value="DNABINDINGHU"/>
</dbReference>
<dbReference type="SMART" id="SM00411">
    <property type="entry name" value="BHL"/>
    <property type="match status" value="1"/>
</dbReference>
<dbReference type="SUPFAM" id="SSF47729">
    <property type="entry name" value="IHF-like DNA-binding proteins"/>
    <property type="match status" value="1"/>
</dbReference>
<dbReference type="PROSITE" id="PS00045">
    <property type="entry name" value="HISTONE_LIKE"/>
    <property type="match status" value="1"/>
</dbReference>
<organism>
    <name type="scientific">Actinobacillus pleuropneumoniae serotype 3 (strain JL03)</name>
    <dbReference type="NCBI Taxonomy" id="434271"/>
    <lineage>
        <taxon>Bacteria</taxon>
        <taxon>Pseudomonadati</taxon>
        <taxon>Pseudomonadota</taxon>
        <taxon>Gammaproteobacteria</taxon>
        <taxon>Pasteurellales</taxon>
        <taxon>Pasteurellaceae</taxon>
        <taxon>Actinobacillus</taxon>
    </lineage>
</organism>
<feature type="chain" id="PRO_1000122126" description="Integration host factor subunit alpha">
    <location>
        <begin position="1"/>
        <end position="98"/>
    </location>
</feature>